<gene>
    <name evidence="1" type="primary">atpC</name>
    <name type="ordered locus">MSMEG_4935</name>
    <name type="ordered locus">MSMEI_4808</name>
</gene>
<proteinExistence type="evidence at protein level"/>
<dbReference type="EMBL" id="CP000480">
    <property type="protein sequence ID" value="ABK70189.1"/>
    <property type="molecule type" value="Genomic_DNA"/>
</dbReference>
<dbReference type="EMBL" id="CP001663">
    <property type="protein sequence ID" value="AFP41253.1"/>
    <property type="molecule type" value="Genomic_DNA"/>
</dbReference>
<dbReference type="RefSeq" id="WP_011730202.1">
    <property type="nucleotide sequence ID" value="NZ_SIJM01000067.1"/>
</dbReference>
<dbReference type="RefSeq" id="YP_889187.1">
    <property type="nucleotide sequence ID" value="NC_008596.1"/>
</dbReference>
<dbReference type="PDB" id="6FOC">
    <property type="method" value="X-ray"/>
    <property type="resolution" value="4.00 A"/>
    <property type="chains" value="H=1-121"/>
</dbReference>
<dbReference type="PDB" id="6PI4">
    <property type="method" value="X-ray"/>
    <property type="resolution" value="2.10 A"/>
    <property type="chains" value="A=1-121"/>
</dbReference>
<dbReference type="PDB" id="7JG5">
    <property type="method" value="EM"/>
    <property type="resolution" value="3.40 A"/>
    <property type="chains" value="H=1-121"/>
</dbReference>
<dbReference type="PDB" id="7JG6">
    <property type="method" value="EM"/>
    <property type="resolution" value="3.70 A"/>
    <property type="chains" value="H=1-121"/>
</dbReference>
<dbReference type="PDB" id="7JG7">
    <property type="method" value="EM"/>
    <property type="resolution" value="3.50 A"/>
    <property type="chains" value="H=1-121"/>
</dbReference>
<dbReference type="PDB" id="7JG8">
    <property type="method" value="EM"/>
    <property type="resolution" value="3.30 A"/>
    <property type="chains" value="H=1-121"/>
</dbReference>
<dbReference type="PDB" id="7JG9">
    <property type="method" value="EM"/>
    <property type="resolution" value="3.40 A"/>
    <property type="chains" value="H=1-121"/>
</dbReference>
<dbReference type="PDB" id="7JGA">
    <property type="method" value="EM"/>
    <property type="resolution" value="3.20 A"/>
    <property type="chains" value="H=1-121"/>
</dbReference>
<dbReference type="PDB" id="7NJK">
    <property type="method" value="EM"/>
    <property type="resolution" value="2.52 A"/>
    <property type="chains" value="H=1-121"/>
</dbReference>
<dbReference type="PDB" id="7NJL">
    <property type="method" value="EM"/>
    <property type="resolution" value="2.71 A"/>
    <property type="chains" value="H=1-121"/>
</dbReference>
<dbReference type="PDB" id="7NJM">
    <property type="method" value="EM"/>
    <property type="resolution" value="2.84 A"/>
    <property type="chains" value="H=1-121"/>
</dbReference>
<dbReference type="PDB" id="7NJN">
    <property type="method" value="EM"/>
    <property type="resolution" value="2.64 A"/>
    <property type="chains" value="H=1-121"/>
</dbReference>
<dbReference type="PDB" id="7NJO">
    <property type="method" value="EM"/>
    <property type="resolution" value="2.92 A"/>
    <property type="chains" value="H=1-121"/>
</dbReference>
<dbReference type="PDB" id="7NJP">
    <property type="method" value="EM"/>
    <property type="resolution" value="2.84 A"/>
    <property type="chains" value="H=1-121"/>
</dbReference>
<dbReference type="PDB" id="7NJQ">
    <property type="method" value="EM"/>
    <property type="resolution" value="2.67 A"/>
    <property type="chains" value="H=1-121"/>
</dbReference>
<dbReference type="PDB" id="7NJR">
    <property type="method" value="EM"/>
    <property type="resolution" value="2.56 A"/>
    <property type="chains" value="H=1-121"/>
</dbReference>
<dbReference type="PDB" id="7NJS">
    <property type="method" value="EM"/>
    <property type="resolution" value="2.46 A"/>
    <property type="chains" value="H=1-121"/>
</dbReference>
<dbReference type="PDB" id="7NK9">
    <property type="method" value="EM"/>
    <property type="resolution" value="2.90 A"/>
    <property type="chains" value="H=1-121"/>
</dbReference>
<dbReference type="PDB" id="7NKB">
    <property type="method" value="EM"/>
    <property type="resolution" value="2.90 A"/>
    <property type="chains" value="H=1-121"/>
</dbReference>
<dbReference type="PDB" id="7NKK">
    <property type="method" value="EM"/>
    <property type="resolution" value="3.60 A"/>
    <property type="chains" value="H=1-121"/>
</dbReference>
<dbReference type="PDB" id="7NKN">
    <property type="method" value="EM"/>
    <property type="resolution" value="2.71 A"/>
    <property type="chains" value="H=1-121"/>
</dbReference>
<dbReference type="PDB" id="7NKP">
    <property type="method" value="EM"/>
    <property type="resolution" value="4.06 A"/>
    <property type="chains" value="H=1-121"/>
</dbReference>
<dbReference type="PDB" id="7NL9">
    <property type="method" value="EM"/>
    <property type="resolution" value="2.86 A"/>
    <property type="chains" value="H=1-121"/>
</dbReference>
<dbReference type="PDB" id="7Y5B">
    <property type="method" value="EM"/>
    <property type="resolution" value="4.40 A"/>
    <property type="chains" value="H=1-121"/>
</dbReference>
<dbReference type="PDB" id="7Y5C">
    <property type="method" value="EM"/>
    <property type="resolution" value="4.70 A"/>
    <property type="chains" value="H=1-121"/>
</dbReference>
<dbReference type="PDB" id="7Y5D">
    <property type="method" value="EM"/>
    <property type="resolution" value="7.30 A"/>
    <property type="chains" value="H=1-121"/>
</dbReference>
<dbReference type="PDB" id="8G08">
    <property type="method" value="EM"/>
    <property type="resolution" value="2.80 A"/>
    <property type="chains" value="H=1-121"/>
</dbReference>
<dbReference type="PDB" id="8G09">
    <property type="method" value="EM"/>
    <property type="resolution" value="3.10 A"/>
    <property type="chains" value="H=1-121"/>
</dbReference>
<dbReference type="PDB" id="8G0A">
    <property type="method" value="EM"/>
    <property type="resolution" value="2.90 A"/>
    <property type="chains" value="H=1-121"/>
</dbReference>
<dbReference type="PDB" id="8G0C">
    <property type="method" value="EM"/>
    <property type="resolution" value="2.80 A"/>
    <property type="chains" value="H=1-121"/>
</dbReference>
<dbReference type="PDB" id="8G0D">
    <property type="method" value="EM"/>
    <property type="resolution" value="2.90 A"/>
    <property type="chains" value="H=1-121"/>
</dbReference>
<dbReference type="PDB" id="8G0E">
    <property type="method" value="EM"/>
    <property type="resolution" value="2.60 A"/>
    <property type="chains" value="H=1-121"/>
</dbReference>
<dbReference type="PDBsum" id="6FOC"/>
<dbReference type="PDBsum" id="6PI4"/>
<dbReference type="PDBsum" id="7JG5"/>
<dbReference type="PDBsum" id="7JG6"/>
<dbReference type="PDBsum" id="7JG7"/>
<dbReference type="PDBsum" id="7JG8"/>
<dbReference type="PDBsum" id="7JG9"/>
<dbReference type="PDBsum" id="7JGA"/>
<dbReference type="PDBsum" id="7NJK"/>
<dbReference type="PDBsum" id="7NJL"/>
<dbReference type="PDBsum" id="7NJM"/>
<dbReference type="PDBsum" id="7NJN"/>
<dbReference type="PDBsum" id="7NJO"/>
<dbReference type="PDBsum" id="7NJP"/>
<dbReference type="PDBsum" id="7NJQ"/>
<dbReference type="PDBsum" id="7NJR"/>
<dbReference type="PDBsum" id="7NJS"/>
<dbReference type="PDBsum" id="7NK9"/>
<dbReference type="PDBsum" id="7NKB"/>
<dbReference type="PDBsum" id="7NKK"/>
<dbReference type="PDBsum" id="7NKN"/>
<dbReference type="PDBsum" id="7NKP"/>
<dbReference type="PDBsum" id="7NL9"/>
<dbReference type="PDBsum" id="7Y5B"/>
<dbReference type="PDBsum" id="7Y5C"/>
<dbReference type="PDBsum" id="7Y5D"/>
<dbReference type="PDBsum" id="8G08"/>
<dbReference type="PDBsum" id="8G09"/>
<dbReference type="PDBsum" id="8G0A"/>
<dbReference type="PDBsum" id="8G0C"/>
<dbReference type="PDBsum" id="8G0D"/>
<dbReference type="PDBsum" id="8G0E"/>
<dbReference type="EMDB" id="EMD-12377"/>
<dbReference type="EMDB" id="EMD-12382"/>
<dbReference type="EMDB" id="EMD-12387"/>
<dbReference type="EMDB" id="EMD-12392"/>
<dbReference type="EMDB" id="EMD-12397"/>
<dbReference type="EMDB" id="EMD-12402"/>
<dbReference type="EMDB" id="EMD-12407"/>
<dbReference type="EMDB" id="EMD-12412"/>
<dbReference type="EMDB" id="EMD-12417"/>
<dbReference type="EMDB" id="EMD-12434"/>
<dbReference type="EMDB" id="EMD-12436"/>
<dbReference type="EMDB" id="EMD-12442"/>
<dbReference type="EMDB" id="EMD-12444"/>
<dbReference type="EMDB" id="EMD-12461"/>
<dbReference type="EMDB" id="EMD-29649"/>
<dbReference type="EMDB" id="EMD-29650"/>
<dbReference type="EMDB" id="EMD-29651"/>
<dbReference type="EMDB" id="EMD-29653"/>
<dbReference type="EMDB" id="EMD-29654"/>
<dbReference type="EMDB" id="EMD-29655"/>
<dbReference type="EMDB" id="EMD-33615"/>
<dbReference type="EMDB" id="EMD-33616"/>
<dbReference type="EMDB" id="EMD-33617"/>
<dbReference type="SMR" id="A0R1Z9"/>
<dbReference type="STRING" id="246196.MSMEG_4935"/>
<dbReference type="PaxDb" id="246196-MSMEI_4808"/>
<dbReference type="KEGG" id="msb:LJ00_24405"/>
<dbReference type="KEGG" id="msg:MSMEI_4808"/>
<dbReference type="KEGG" id="msm:MSMEG_4935"/>
<dbReference type="PATRIC" id="fig|246196.19.peg.4814"/>
<dbReference type="eggNOG" id="COG0355">
    <property type="taxonomic scope" value="Bacteria"/>
</dbReference>
<dbReference type="OrthoDB" id="9791445at2"/>
<dbReference type="Proteomes" id="UP000000757">
    <property type="component" value="Chromosome"/>
</dbReference>
<dbReference type="Proteomes" id="UP000006158">
    <property type="component" value="Chromosome"/>
</dbReference>
<dbReference type="GO" id="GO:0005886">
    <property type="term" value="C:plasma membrane"/>
    <property type="evidence" value="ECO:0007669"/>
    <property type="project" value="UniProtKB-SubCell"/>
</dbReference>
<dbReference type="GO" id="GO:0045259">
    <property type="term" value="C:proton-transporting ATP synthase complex"/>
    <property type="evidence" value="ECO:0007669"/>
    <property type="project" value="UniProtKB-KW"/>
</dbReference>
<dbReference type="GO" id="GO:0005524">
    <property type="term" value="F:ATP binding"/>
    <property type="evidence" value="ECO:0007669"/>
    <property type="project" value="UniProtKB-UniRule"/>
</dbReference>
<dbReference type="GO" id="GO:0046933">
    <property type="term" value="F:proton-transporting ATP synthase activity, rotational mechanism"/>
    <property type="evidence" value="ECO:0007669"/>
    <property type="project" value="UniProtKB-UniRule"/>
</dbReference>
<dbReference type="CDD" id="cd12152">
    <property type="entry name" value="F1-ATPase_delta"/>
    <property type="match status" value="1"/>
</dbReference>
<dbReference type="Gene3D" id="2.60.15.10">
    <property type="entry name" value="F0F1 ATP synthase delta/epsilon subunit, N-terminal"/>
    <property type="match status" value="1"/>
</dbReference>
<dbReference type="HAMAP" id="MF_00530">
    <property type="entry name" value="ATP_synth_epsil_bac"/>
    <property type="match status" value="1"/>
</dbReference>
<dbReference type="InterPro" id="IPR001469">
    <property type="entry name" value="ATP_synth_F1_dsu/esu"/>
</dbReference>
<dbReference type="InterPro" id="IPR020546">
    <property type="entry name" value="ATP_synth_F1_dsu/esu_N"/>
</dbReference>
<dbReference type="InterPro" id="IPR036771">
    <property type="entry name" value="ATPsynth_dsu/esu_N"/>
</dbReference>
<dbReference type="NCBIfam" id="TIGR01216">
    <property type="entry name" value="ATP_synt_epsi"/>
    <property type="match status" value="1"/>
</dbReference>
<dbReference type="NCBIfam" id="NF009977">
    <property type="entry name" value="PRK13442.1"/>
    <property type="match status" value="1"/>
</dbReference>
<dbReference type="PANTHER" id="PTHR13822">
    <property type="entry name" value="ATP SYNTHASE DELTA/EPSILON CHAIN"/>
    <property type="match status" value="1"/>
</dbReference>
<dbReference type="PANTHER" id="PTHR13822:SF10">
    <property type="entry name" value="ATP SYNTHASE EPSILON CHAIN, CHLOROPLASTIC"/>
    <property type="match status" value="1"/>
</dbReference>
<dbReference type="Pfam" id="PF02823">
    <property type="entry name" value="ATP-synt_DE_N"/>
    <property type="match status" value="1"/>
</dbReference>
<dbReference type="SUPFAM" id="SSF51344">
    <property type="entry name" value="Epsilon subunit of F1F0-ATP synthase N-terminal domain"/>
    <property type="match status" value="1"/>
</dbReference>
<feature type="initiator methionine" description="Removed" evidence="2">
    <location>
        <position position="1"/>
    </location>
</feature>
<feature type="chain" id="PRO_1000056506" description="ATP synthase epsilon chain">
    <location>
        <begin position="2"/>
        <end position="121"/>
    </location>
</feature>
<feature type="strand" evidence="6">
    <location>
        <begin position="4"/>
        <end position="8"/>
    </location>
</feature>
<feature type="strand" evidence="3">
    <location>
        <begin position="21"/>
        <end position="27"/>
    </location>
</feature>
<feature type="strand" evidence="3">
    <location>
        <begin position="30"/>
        <end position="34"/>
    </location>
</feature>
<feature type="strand" evidence="3">
    <location>
        <begin position="41"/>
        <end position="45"/>
    </location>
</feature>
<feature type="strand" evidence="3">
    <location>
        <begin position="50"/>
        <end position="54"/>
    </location>
</feature>
<feature type="strand" evidence="5">
    <location>
        <begin position="56"/>
        <end position="58"/>
    </location>
</feature>
<feature type="strand" evidence="3">
    <location>
        <begin position="61"/>
        <end position="67"/>
    </location>
</feature>
<feature type="strand" evidence="3">
    <location>
        <begin position="69"/>
        <end position="72"/>
    </location>
</feature>
<feature type="strand" evidence="3">
    <location>
        <begin position="77"/>
        <end position="80"/>
    </location>
</feature>
<feature type="strand" evidence="3">
    <location>
        <begin position="82"/>
        <end position="86"/>
    </location>
</feature>
<feature type="turn" evidence="3">
    <location>
        <begin position="87"/>
        <end position="89"/>
    </location>
</feature>
<feature type="helix" evidence="3">
    <location>
        <begin position="92"/>
        <end position="99"/>
    </location>
</feature>
<feature type="strand" evidence="4">
    <location>
        <begin position="101"/>
        <end position="103"/>
    </location>
</feature>
<feature type="helix" evidence="3">
    <location>
        <begin position="104"/>
        <end position="116"/>
    </location>
</feature>
<protein>
    <recommendedName>
        <fullName evidence="1">ATP synthase epsilon chain</fullName>
    </recommendedName>
    <alternativeName>
        <fullName evidence="1">ATP synthase F1 sector epsilon subunit</fullName>
    </alternativeName>
    <alternativeName>
        <fullName evidence="1">F-ATPase epsilon subunit</fullName>
    </alternativeName>
</protein>
<evidence type="ECO:0000255" key="1">
    <source>
        <dbReference type="HAMAP-Rule" id="MF_00530"/>
    </source>
</evidence>
<evidence type="ECO:0000269" key="2">
    <source>
    </source>
</evidence>
<evidence type="ECO:0007829" key="3">
    <source>
        <dbReference type="PDB" id="6PI4"/>
    </source>
</evidence>
<evidence type="ECO:0007829" key="4">
    <source>
        <dbReference type="PDB" id="7JGA"/>
    </source>
</evidence>
<evidence type="ECO:0007829" key="5">
    <source>
        <dbReference type="PDB" id="7NJR"/>
    </source>
</evidence>
<evidence type="ECO:0007829" key="6">
    <source>
        <dbReference type="PDB" id="7NL9"/>
    </source>
</evidence>
<reference key="1">
    <citation type="submission" date="2006-10" db="EMBL/GenBank/DDBJ databases">
        <authorList>
            <person name="Fleischmann R.D."/>
            <person name="Dodson R.J."/>
            <person name="Haft D.H."/>
            <person name="Merkel J.S."/>
            <person name="Nelson W.C."/>
            <person name="Fraser C.M."/>
        </authorList>
    </citation>
    <scope>NUCLEOTIDE SEQUENCE [LARGE SCALE GENOMIC DNA]</scope>
    <source>
        <strain>ATCC 700084 / mc(2)155</strain>
    </source>
</reference>
<reference key="2">
    <citation type="journal article" date="2007" name="Genome Biol.">
        <title>Interrupted coding sequences in Mycobacterium smegmatis: authentic mutations or sequencing errors?</title>
        <authorList>
            <person name="Deshayes C."/>
            <person name="Perrodou E."/>
            <person name="Gallien S."/>
            <person name="Euphrasie D."/>
            <person name="Schaeffer C."/>
            <person name="Van-Dorsselaer A."/>
            <person name="Poch O."/>
            <person name="Lecompte O."/>
            <person name="Reyrat J.-M."/>
        </authorList>
    </citation>
    <scope>NUCLEOTIDE SEQUENCE [LARGE SCALE GENOMIC DNA]</scope>
    <source>
        <strain>ATCC 700084 / mc(2)155</strain>
    </source>
</reference>
<reference key="3">
    <citation type="journal article" date="2009" name="Genome Res.">
        <title>Ortho-proteogenomics: multiple proteomes investigation through orthology and a new MS-based protocol.</title>
        <authorList>
            <person name="Gallien S."/>
            <person name="Perrodou E."/>
            <person name="Carapito C."/>
            <person name="Deshayes C."/>
            <person name="Reyrat J.-M."/>
            <person name="Van Dorsselaer A."/>
            <person name="Poch O."/>
            <person name="Schaeffer C."/>
            <person name="Lecompte O."/>
        </authorList>
    </citation>
    <scope>NUCLEOTIDE SEQUENCE [LARGE SCALE GENOMIC DNA]</scope>
    <scope>IDENTIFICATION BY MASS SPECTROMETRY [LARGE SCALE ANALYSIS]</scope>
    <scope>CLEAVAGE OF INITIATOR METHIONINE</scope>
    <source>
        <strain>ATCC 700084 / mc(2)155</strain>
    </source>
</reference>
<sequence length="121" mass="13265">MADLNVEIVAVERELWSGPATFVFTRTTAGEIGILPRHIPLVAQLVDDAMVRVEREGEDDLRIAVDGGFLSVTEETVRILVENAQFESEIDADAAKEDAASDDERTAAWGRARLRALGQID</sequence>
<organism>
    <name type="scientific">Mycolicibacterium smegmatis (strain ATCC 700084 / mc(2)155)</name>
    <name type="common">Mycobacterium smegmatis</name>
    <dbReference type="NCBI Taxonomy" id="246196"/>
    <lineage>
        <taxon>Bacteria</taxon>
        <taxon>Bacillati</taxon>
        <taxon>Actinomycetota</taxon>
        <taxon>Actinomycetes</taxon>
        <taxon>Mycobacteriales</taxon>
        <taxon>Mycobacteriaceae</taxon>
        <taxon>Mycolicibacterium</taxon>
    </lineage>
</organism>
<keyword id="KW-0002">3D-structure</keyword>
<keyword id="KW-0066">ATP synthesis</keyword>
<keyword id="KW-1003">Cell membrane</keyword>
<keyword id="KW-0139">CF(1)</keyword>
<keyword id="KW-0375">Hydrogen ion transport</keyword>
<keyword id="KW-0406">Ion transport</keyword>
<keyword id="KW-0472">Membrane</keyword>
<keyword id="KW-1185">Reference proteome</keyword>
<keyword id="KW-0813">Transport</keyword>
<accession>A0R1Z9</accession>
<accession>I7FR58</accession>
<comment type="function">
    <text evidence="1">Produces ATP from ADP in the presence of a proton gradient across the membrane.</text>
</comment>
<comment type="subunit">
    <text evidence="1">F-type ATPases have 2 components, CF(1) - the catalytic core - and CF(0) - the membrane proton channel. CF(1) has five subunits: alpha(3), beta(3), gamma(1), delta(1), epsilon(1). CF(0) has three main subunits: a, b and c.</text>
</comment>
<comment type="subcellular location">
    <subcellularLocation>
        <location evidence="1">Cell membrane</location>
        <topology evidence="1">Peripheral membrane protein</topology>
    </subcellularLocation>
</comment>
<comment type="similarity">
    <text evidence="1">Belongs to the ATPase epsilon chain family.</text>
</comment>
<name>ATPE_MYCS2</name>